<evidence type="ECO:0000250" key="1">
    <source>
        <dbReference type="UniProtKB" id="Q59771"/>
    </source>
</evidence>
<evidence type="ECO:0000269" key="2">
    <source>
    </source>
</evidence>
<evidence type="ECO:0000269" key="3">
    <source>
    </source>
</evidence>
<evidence type="ECO:0000303" key="4">
    <source>
    </source>
</evidence>
<evidence type="ECO:0000305" key="5"/>
<evidence type="ECO:0000312" key="6">
    <source>
        <dbReference type="EMBL" id="ACC79996.1"/>
    </source>
</evidence>
<organism>
    <name type="scientific">Nostoc punctiforme (strain ATCC 29133 / PCC 73102)</name>
    <dbReference type="NCBI Taxonomy" id="63737"/>
    <lineage>
        <taxon>Bacteria</taxon>
        <taxon>Bacillati</taxon>
        <taxon>Cyanobacteriota</taxon>
        <taxon>Cyanophyceae</taxon>
        <taxon>Nostocales</taxon>
        <taxon>Nostocaceae</taxon>
        <taxon>Nostoc</taxon>
    </lineage>
</organism>
<feature type="chain" id="PRO_0000457014" description="L-tryptophan dehydrogenase">
    <location>
        <begin position="1"/>
        <end position="353"/>
    </location>
</feature>
<feature type="active site" description="Proton donor/acceptor" evidence="1">
    <location>
        <position position="80"/>
    </location>
</feature>
<feature type="binding site" evidence="1">
    <location>
        <position position="44"/>
    </location>
    <ligand>
        <name>NAD(+)</name>
        <dbReference type="ChEBI" id="CHEBI:57540"/>
    </ligand>
</feature>
<feature type="binding site" evidence="1">
    <location>
        <position position="114"/>
    </location>
    <ligand>
        <name>NAD(+)</name>
        <dbReference type="ChEBI" id="CHEBI:57540"/>
    </ligand>
</feature>
<feature type="binding site" evidence="1">
    <location>
        <position position="146"/>
    </location>
    <ligand>
        <name>NAD(+)</name>
        <dbReference type="ChEBI" id="CHEBI:57540"/>
    </ligand>
</feature>
<feature type="binding site" evidence="1">
    <location>
        <begin position="176"/>
        <end position="181"/>
    </location>
    <ligand>
        <name>NAD(+)</name>
        <dbReference type="ChEBI" id="CHEBI:57540"/>
    </ligand>
</feature>
<feature type="binding site" evidence="1">
    <location>
        <position position="204"/>
    </location>
    <ligand>
        <name>NAD(+)</name>
        <dbReference type="ChEBI" id="CHEBI:57540"/>
    </ligand>
</feature>
<feature type="binding site" evidence="1">
    <location>
        <begin position="255"/>
        <end position="257"/>
    </location>
    <ligand>
        <name>NAD(+)</name>
        <dbReference type="ChEBI" id="CHEBI:57540"/>
    </ligand>
</feature>
<feature type="mutagenesis site" description="Does not affect KM for L-tryptophan. 1.77-fold increase in Vmax. Retains 29% of the original activity after 24 hours of incubation at 4 degrees Celsius. Exhibits 6-fold increase in Vmax, high stability and retains 90% of the original activity after 24 hours of incubation at 4 degrees Celsius; when associated with G-168; D-234 and N-296 (TrpDH-4mut)." evidence="3">
    <original>L</original>
    <variation>F</variation>
    <location>
        <position position="59"/>
    </location>
</feature>
<feature type="mutagenesis site" description="Does not affect KM for L-tryptophan or Vmax. Retains 63% of the original activity after 24 hours of incubation at 4 degrees Celsius. Exhibits 6-fold increase in Vmax, high stability and retains 90% of the original activity after 24 hours of incubation at 4 degrees Celsius; when associated with F-59; D-234 and N-296 (TrpDH-4mut)." evidence="3">
    <original>D</original>
    <variation>G</variation>
    <location>
        <position position="168"/>
    </location>
</feature>
<feature type="mutagenesis site" description="Does not affect KM for L-tryptophan. 6.32-fold increase in Vmax. Retains 25% of the original activity after 24 hours of incubation at 4 degrees Celsius. Exhibits 6-fold increase in Vmax, high stability and retains 90% of the original activity after 24 hours of incubation at 4 degrees Celsius; when associated with F-59; G-168 and N-296 (TrpDH-4mut)." evidence="3">
    <original>A</original>
    <variation>D</variation>
    <location>
        <position position="234"/>
    </location>
</feature>
<feature type="mutagenesis site" description="Does not affect KM for L-tryptophan or Vmax. Retains 79% of the original activity after 24 hours of incubation at 4 degrees Celsius. Exhibits 6-fold increase in Vmax, high stability and retains 90% of the original activity after 24 hours of incubation at 4 degrees Celsius; when associated with F-59; G-168 and D-234 (TrpDH-4mut)." evidence="3">
    <original>I</original>
    <variation>N</variation>
    <location>
        <position position="296"/>
    </location>
</feature>
<sequence length="353" mass="38381">MLLFETVREMGHEQVLFCHGKNPEIKAIIAIHDTTLGPAMGATRLMPYVNEEAALKDALRLSRGMTYKAACANIPAGGGKAVIIANPENKTDDLLRAYGRFVNSLNGRFITGQDVNITPDDVRTISQETNHVVGVSEKSGGPAPITSLGVFLGIKAAVESRWQSKRLDGMKVAVQGLGNVGKNLCRHLHEHDVKLFVSDVDPAKAEEAKRLFGATVVEPTEIYSLDVDIFSPCALGGILNSHTIPFLQAQIIAGAANNQLENEQLHSQMLTRKGILYSPDYVINAGGLINVYNEMIGYDEEKAFKQVHNIYDTLLAIFDIAKEQGVTTNDAAKRLAEDRISNSKRSKSKAIAA</sequence>
<gene>
    <name evidence="6" type="ordered locus">Npun_R1275</name>
</gene>
<name>TRPDH_NOSP7</name>
<dbReference type="EC" id="1.4.1.19" evidence="2 3"/>
<dbReference type="EMBL" id="CP001037">
    <property type="protein sequence ID" value="ACC79996.1"/>
    <property type="molecule type" value="Genomic_DNA"/>
</dbReference>
<dbReference type="RefSeq" id="WP_012408017.1">
    <property type="nucleotide sequence ID" value="NC_010628.1"/>
</dbReference>
<dbReference type="SMR" id="B2IXH4"/>
<dbReference type="STRING" id="63737.Npun_R1275"/>
<dbReference type="EnsemblBacteria" id="ACC79996">
    <property type="protein sequence ID" value="ACC79996"/>
    <property type="gene ID" value="Npun_R1275"/>
</dbReference>
<dbReference type="KEGG" id="npu:Npun_R1275"/>
<dbReference type="eggNOG" id="COG0334">
    <property type="taxonomic scope" value="Bacteria"/>
</dbReference>
<dbReference type="HOGENOM" id="CLU_025763_0_0_3"/>
<dbReference type="OrthoDB" id="9803297at2"/>
<dbReference type="PhylomeDB" id="B2IXH4"/>
<dbReference type="Proteomes" id="UP000001191">
    <property type="component" value="Chromosome"/>
</dbReference>
<dbReference type="GO" id="GO:0050049">
    <property type="term" value="F:L-leucine dehydrogenase activity"/>
    <property type="evidence" value="ECO:0007669"/>
    <property type="project" value="UniProtKB-EC"/>
</dbReference>
<dbReference type="GO" id="GO:0000166">
    <property type="term" value="F:nucleotide binding"/>
    <property type="evidence" value="ECO:0007669"/>
    <property type="project" value="UniProtKB-KW"/>
</dbReference>
<dbReference type="GO" id="GO:0006520">
    <property type="term" value="P:amino acid metabolic process"/>
    <property type="evidence" value="ECO:0007669"/>
    <property type="project" value="InterPro"/>
</dbReference>
<dbReference type="CDD" id="cd01075">
    <property type="entry name" value="NAD_bind_Leu_Phe_Val_DH"/>
    <property type="match status" value="1"/>
</dbReference>
<dbReference type="FunFam" id="3.40.50.10860:FF:000010">
    <property type="entry name" value="Leucine dehydrogenase"/>
    <property type="match status" value="1"/>
</dbReference>
<dbReference type="Gene3D" id="3.40.50.10860">
    <property type="entry name" value="Leucine Dehydrogenase, chain A, domain 1"/>
    <property type="match status" value="1"/>
</dbReference>
<dbReference type="Gene3D" id="3.40.50.720">
    <property type="entry name" value="NAD(P)-binding Rossmann-like Domain"/>
    <property type="match status" value="1"/>
</dbReference>
<dbReference type="InterPro" id="IPR046346">
    <property type="entry name" value="Aminoacid_DH-like_N_sf"/>
</dbReference>
<dbReference type="InterPro" id="IPR006095">
    <property type="entry name" value="Glu/Leu/Phe/Val/Trp_DH"/>
</dbReference>
<dbReference type="InterPro" id="IPR006096">
    <property type="entry name" value="Glu/Leu/Phe/Val/Trp_DH_C"/>
</dbReference>
<dbReference type="InterPro" id="IPR006097">
    <property type="entry name" value="Glu/Leu/Phe/Val/Trp_DH_dimer"/>
</dbReference>
<dbReference type="InterPro" id="IPR033524">
    <property type="entry name" value="Glu/Leu/Phe/Val_DH_AS"/>
</dbReference>
<dbReference type="InterPro" id="IPR016211">
    <property type="entry name" value="Glu/Phe/Leu/Val/Trp_DH_bac/arc"/>
</dbReference>
<dbReference type="InterPro" id="IPR036291">
    <property type="entry name" value="NAD(P)-bd_dom_sf"/>
</dbReference>
<dbReference type="NCBIfam" id="NF035922">
    <property type="entry name" value="Trp_DH_ScyB"/>
    <property type="match status" value="1"/>
</dbReference>
<dbReference type="PANTHER" id="PTHR42722">
    <property type="entry name" value="LEUCINE DEHYDROGENASE"/>
    <property type="match status" value="1"/>
</dbReference>
<dbReference type="PANTHER" id="PTHR42722:SF1">
    <property type="entry name" value="VALINE DEHYDROGENASE"/>
    <property type="match status" value="1"/>
</dbReference>
<dbReference type="Pfam" id="PF00208">
    <property type="entry name" value="ELFV_dehydrog"/>
    <property type="match status" value="2"/>
</dbReference>
<dbReference type="Pfam" id="PF02812">
    <property type="entry name" value="ELFV_dehydrog_N"/>
    <property type="match status" value="1"/>
</dbReference>
<dbReference type="PIRSF" id="PIRSF000188">
    <property type="entry name" value="Phe_leu_dh"/>
    <property type="match status" value="1"/>
</dbReference>
<dbReference type="PRINTS" id="PR00082">
    <property type="entry name" value="GLFDHDRGNASE"/>
</dbReference>
<dbReference type="SMART" id="SM00839">
    <property type="entry name" value="ELFV_dehydrog"/>
    <property type="match status" value="1"/>
</dbReference>
<dbReference type="SUPFAM" id="SSF53223">
    <property type="entry name" value="Aminoacid dehydrogenase-like, N-terminal domain"/>
    <property type="match status" value="1"/>
</dbReference>
<dbReference type="SUPFAM" id="SSF51735">
    <property type="entry name" value="NAD(P)-binding Rossmann-fold domains"/>
    <property type="match status" value="1"/>
</dbReference>
<dbReference type="PROSITE" id="PS00074">
    <property type="entry name" value="GLFV_DEHYDROGENASE"/>
    <property type="match status" value="1"/>
</dbReference>
<accession>B2IXH4</accession>
<protein>
    <recommendedName>
        <fullName evidence="4">L-tryptophan dehydrogenase</fullName>
        <shortName evidence="5">L-Trp dehydrogenase</shortName>
        <shortName evidence="4">TrpDH</shortName>
        <ecNumber evidence="2 3">1.4.1.19</ecNumber>
    </recommendedName>
</protein>
<proteinExistence type="evidence at protein level"/>
<comment type="function">
    <text evidence="2 3">Catalyzes the reversible oxidative deamination of L-tryptophan to indole-3-pyruvate in the presence of NAD(+) (PubMed:18954141, PubMed:25615944). Cannot use other L-amino acids and D-Trp (PubMed:25615944). Involved in the biosynthesis of scytonemin, a cyanobacterial radiation-absorbing pigment (PubMed:18954141).</text>
</comment>
<comment type="catalytic activity">
    <reaction evidence="2 3">
        <text>L-tryptophan + NAD(+) + H2O = indole-3-pyruvate + NH4(+) + NADH + H(+)</text>
        <dbReference type="Rhea" id="RHEA:13473"/>
        <dbReference type="ChEBI" id="CHEBI:15377"/>
        <dbReference type="ChEBI" id="CHEBI:15378"/>
        <dbReference type="ChEBI" id="CHEBI:17640"/>
        <dbReference type="ChEBI" id="CHEBI:28938"/>
        <dbReference type="ChEBI" id="CHEBI:57540"/>
        <dbReference type="ChEBI" id="CHEBI:57912"/>
        <dbReference type="ChEBI" id="CHEBI:57945"/>
        <dbReference type="EC" id="1.4.1.19"/>
    </reaction>
    <physiologicalReaction direction="left-to-right" evidence="2">
        <dbReference type="Rhea" id="RHEA:13474"/>
    </physiologicalReaction>
</comment>
<comment type="biophysicochemical properties">
    <kinetics>
        <KM evidence="3">0.201 mM for L-tryptophan</KM>
        <Vmax evidence="3">1.11 umol/min/mg enzyme</Vmax>
    </kinetics>
    <temperatureDependence>
        <text evidence="3">The activity significantly decreases to less than 20% of the original activity after 24 hours of incubation at 4 degrees Celsius.</text>
    </temperatureDependence>
</comment>
<comment type="subunit">
    <text evidence="3">Homodimer.</text>
</comment>
<comment type="biotechnology">
    <text evidence="3">The mutant TrpDH-4mut (L59F/D168G/A234D/I296N) exhibits higher stability and specific activity than the wild-type enzyme, and could be used as a simple and rapid enzymatic method to determine L-tryptophan in human plasma samples, which is useful for the diagnosis and treatment of inherited metabolic disorders of L-tryptophan metabolism.</text>
</comment>
<comment type="similarity">
    <text evidence="5">Belongs to the Glu/Leu/Phe/Val dehydrogenases family.</text>
</comment>
<reference key="1">
    <citation type="journal article" date="2013" name="Plant Physiol.">
        <title>A Nostoc punctiforme Sugar Transporter Necessary to Establish a Cyanobacterium-Plant Symbiosis.</title>
        <authorList>
            <person name="Ekman M."/>
            <person name="Picossi S."/>
            <person name="Campbell E.L."/>
            <person name="Meeks J.C."/>
            <person name="Flores E."/>
        </authorList>
    </citation>
    <scope>NUCLEOTIDE SEQUENCE [LARGE SCALE GENOMIC DNA]</scope>
    <source>
        <strain>ATCC 29133 / PCC 73102</strain>
    </source>
</reference>
<reference key="2">
    <citation type="journal article" date="2008" name="J. Am. Chem. Soc.">
        <title>Investigating the initial steps in the biosynthesis of cyanobacterial sunscreen scytonemin.</title>
        <authorList>
            <person name="Balskus E.P."/>
            <person name="Walsh C.T."/>
        </authorList>
    </citation>
    <scope>FUNCTION</scope>
    <scope>CATALYTIC ACTIVITY</scope>
    <source>
        <strain>ATCC 29133 / PCC 73102</strain>
    </source>
</reference>
<reference key="3">
    <citation type="journal article" date="2015" name="J. Biotechnol.">
        <title>Enhancement of stability of L-tryptophan dehydrogenase from Nostoc punctiforme ATCC29133 and its application to L-tryptophan assay.</title>
        <authorList>
            <person name="Matsui D."/>
            <person name="Okazaki S."/>
            <person name="Matsuda M."/>
            <person name="Asano Y."/>
        </authorList>
    </citation>
    <scope>FUNCTION</scope>
    <scope>CATALYTIC ACTIVITY</scope>
    <scope>BIOPHYSICOCHEMICAL PROPERTIES</scope>
    <scope>SUBUNIT</scope>
    <scope>BIOTECHNOLOGY</scope>
    <scope>MUTAGENESIS OF LEU-59; ASP-168; ALA-234 AND ILE-296</scope>
    <source>
        <strain>ATCC 29133 / PCC 73102</strain>
    </source>
</reference>
<keyword id="KW-0520">NAD</keyword>
<keyword id="KW-0547">Nucleotide-binding</keyword>
<keyword id="KW-0560">Oxidoreductase</keyword>
<keyword id="KW-1185">Reference proteome</keyword>